<keyword id="KW-0072">Autophagy</keyword>
<keyword id="KW-0175">Coiled coil</keyword>
<keyword id="KW-0963">Cytoplasm</keyword>
<keyword id="KW-0968">Cytoplasmic vesicle</keyword>
<keyword id="KW-0967">Endosome</keyword>
<keyword id="KW-0458">Lysosome</keyword>
<keyword id="KW-0472">Membrane</keyword>
<keyword id="KW-0479">Metal-binding</keyword>
<keyword id="KW-1185">Reference proteome</keyword>
<keyword id="KW-0813">Transport</keyword>
<keyword id="KW-0862">Zinc</keyword>
<keyword id="KW-0863">Zinc-finger</keyword>
<comment type="function">
    <text evidence="1 4 5 6 7">Plays a role in vesicle-mediated protein trafficking to lysosomal compartments including the endocytic membrane transport and autophagic pathways (PubMed:25273556, PubMed:26783301). Believed to act as a core component of the putative HOPS and CORVET endosomal tethering complexes which are proposed to be involved in the rab-5-to-rab-7 endosome conversion probably implicating sand-1, and via binding SNAREs and SNARE complexes to mediate tethering and docking events during SNARE-mediated membrane fusion (By similarity). The HOPS complex is proposed to be recruited to rab-7 on the late endosomal membrane and to regulate late endocytic, phagocytic and autophagic traffic towards lysosomes (By similarity). Within the HOPS complex, contributes to the normal development of gut granules in intestinal cells of the embryo, and also promotes the trafficking of embryonic intestinal gut granules away from lysosomes (PubMed:24501423, PubMed:25273556). The CORVET complex is proposed to function as a rab-5 effector to mediate early endosome fusion probably in specific endosome subpopulations (By similarity). Required for fusion of endosomes and autophagosomes with lysosomes (PubMed:18923146, PubMed:26783301). Plays a role in the degradation of apoptotic cells during programmed cell death (PubMed:18923146).</text>
</comment>
<comment type="subunit">
    <text evidence="1">Probable core component of at least two putative endosomal tethering complexes, the homotypic fusion and vacuole protein sorting (HOPS) complex and the class C core vacuole/endosome tethering (CORVET) complex. Their common core is composed of the class C Vps proteins vps-11, vps-16 and vps-18, which in HOPS further associates with vps-33.1, vps-39 and vps-41 and in CORVET with vps-8 and vps-33.2.</text>
</comment>
<comment type="subcellular location">
    <subcellularLocation>
        <location evidence="4">Cytoplasm</location>
    </subcellularLocation>
    <subcellularLocation>
        <location evidence="1">Late endosome membrane</location>
        <topology evidence="1">Peripheral membrane protein</topology>
        <orientation evidence="1">Cytoplasmic side</orientation>
    </subcellularLocation>
    <subcellularLocation>
        <location evidence="1">Lysosome membrane</location>
        <topology evidence="1">Peripheral membrane protein</topology>
        <orientation evidence="1">Cytoplasmic side</orientation>
    </subcellularLocation>
    <subcellularLocation>
        <location evidence="1">Early endosome</location>
    </subcellularLocation>
    <subcellularLocation>
        <location evidence="1">Cytoplasmic vesicle</location>
        <location evidence="1">Autophagosome</location>
    </subcellularLocation>
    <subcellularLocation>
        <location evidence="1">Cytoplasmic vesicle</location>
        <location evidence="1">Clathrin-coated vesicle</location>
    </subcellularLocation>
</comment>
<comment type="tissue specificity">
    <text evidence="4">In hermaphrodites, expressed in coelomocytes and gonadal sheath cells.</text>
</comment>
<comment type="developmental stage">
    <text evidence="4">Ubiquitously expressed in embryos. In early larvae, expressed in hypodermal cells, seam cells and body wall muscle cells.</text>
</comment>
<comment type="disruption phenotype">
    <text evidence="4 5 6 7">Temperature-sensitive defects in the formation of gut granules during embryogenesis (PubMed:24501423). At 15 degrees Celsius, pretzel-stage embryos have a reduced number of gut granules in intestinal cells, and at 22 degrees Celsius, pretzel-stage embryos completely lack gut granules in intestinal cells (PubMed:24501423). At 25 degrees Celsius, many embryos arrest by the pre-bean stage before elongation, and 76% of these embryos contain gut granules irregularly distributed throughout the embryo (PubMed:24501423). Defective apoptotic germ cell corpse digestion with delayed degradation of chromatin in late germ cell corpses (PubMed:18923146). This results in increased numbers of germ cell corpses at 20 degrees Celsius during embryogenesis and post the L4 stage of larval development, and furthermore the retention of cell corpses for a longer duration of time (PubMed:18923146). Impaired formation of endosomes and lysosomes in coelomocytes, in particular there is impaired formation of recycling endosomes (PubMed:18923146). In addition, there are endosome/lysosome fusion defects in coelomocytes (PubMed:18923146, PubMed:26783301). RNAi-mediated knockdown results in defective endosome maturation with the accumulation of small vesicles near the gut lumen and large endosomes/lysosomes on the basal side of the cell (PubMed:25273556). Double knockout with either sorf-1 or sorf-2, results in larger endosomes and larger lysosomes and thus suppresses the endosome/lysosome fusion defect in the vps-18 single mutant (PubMed:26783301).</text>
</comment>
<evidence type="ECO:0000250" key="1">
    <source>
        <dbReference type="UniProtKB" id="Q9P253"/>
    </source>
</evidence>
<evidence type="ECO:0000255" key="2"/>
<evidence type="ECO:0000255" key="3">
    <source>
        <dbReference type="PROSITE-ProRule" id="PRU00175"/>
    </source>
</evidence>
<evidence type="ECO:0000269" key="4">
    <source>
    </source>
</evidence>
<evidence type="ECO:0000269" key="5">
    <source>
    </source>
</evidence>
<evidence type="ECO:0000269" key="6">
    <source>
    </source>
</evidence>
<evidence type="ECO:0000269" key="7">
    <source>
    </source>
</evidence>
<evidence type="ECO:0000305" key="8"/>
<evidence type="ECO:0000312" key="9">
    <source>
        <dbReference type="Proteomes" id="UP000001940"/>
    </source>
</evidence>
<evidence type="ECO:0000312" key="10">
    <source>
        <dbReference type="WormBase" id="W06B4.3"/>
    </source>
</evidence>
<name>VPS18_CAEEL</name>
<gene>
    <name evidence="10" type="primary">vps-18</name>
    <name evidence="10" type="ORF">W06B4.3</name>
</gene>
<accession>Q23194</accession>
<accession>G4SQH0</accession>
<protein>
    <recommendedName>
        <fullName evidence="8">Vacuolar protein sorting-associated protein 18 homolog</fullName>
    </recommendedName>
</protein>
<proteinExistence type="evidence at protein level"/>
<sequence length="1026" mass="116669">MIKNTAKNKNGIITRATIDLKKDLKFVKLTAVSNLAVQNGEMLAAVTEKLLVHYSEGTGERHQEMSLPLNGPDHVAYIHLSRTGFHAIVSSKLGHNFYIHLKSNAFHHLKKLRCVVTAVGWNPDYSKETDTTGPILLGTAQGSIIELNVGSTGMMTTLKELTSQVAQIAEQRITSAPSPAAAITDIQLFQLADDDPKNKKWMVIIAQMARLIVLITDNEPAPVVKLGGFTSSASLQAGLMNLATEQAPSTTFHSFFTSPNTLQHTISSSKFSEKFKNHGFLTMHPTIAEPKRYAWLSPDGISIGNVNIYAERIQDVLVEEFNIEHRLIEGRLEPPTGIALTDYHVLLAYSSRVLALSLLPPHDVIFEDPWNPELGGALGFVSDNVAEFVWLYTQTFAMKYGTNDEARYIWKTYLDRGEYQKALQIARTRVAIEPDALEMVLRKQADFYIQEKNFTAAAEILAQSSEPFESVVLKFLTNSSERKMGLKTLLDKKLERLTRHEDKIRRDALVMWLLNVQLEELAEMRRLKNSNPDPAFVEKLRDTTDHVQRYFMRKNVIESIQTNRDAVYRMCVAHADFEMQLFFANAVKDLRTVIDILMLREQYFEVLEVLKNQRISELTYEMCPLLIEHIPKQVIVYLIQNQDQISPQKLTPCLSLCVKNMEMAIPAIKYLEAQFKGTQTISQNPQNLANLHNIYIHLMAKFRREKLLGYLESHGTIRSDLPYELDFAMRTCEQFKIEPCVVYLFCVAGMFGDAVEKALGFDVDLAKKCALMMEEAEANFAWLEGMEDPAATSYIRQKLDEKAKKAIWLKIGQYYVTQENNVDKCIELINESNHLLTIQDLLPIIPKFTRVGALKPIIVDFLKRNKQRLEKLERSMKEATEIASEIRDKQEKLKNRTTVVKPSDVCSHCARPISGRAFNVHSCRHFFHRECLEIAMISFLSQEEVEKMKTLIIDEERVLSQMKAEQLAGNQKGFIEKQEKYLKIAAFISNIVGAECPLCGNIAISQIDKQFLSDEEFAADLNTWLL</sequence>
<organism evidence="9">
    <name type="scientific">Caenorhabditis elegans</name>
    <dbReference type="NCBI Taxonomy" id="6239"/>
    <lineage>
        <taxon>Eukaryota</taxon>
        <taxon>Metazoa</taxon>
        <taxon>Ecdysozoa</taxon>
        <taxon>Nematoda</taxon>
        <taxon>Chromadorea</taxon>
        <taxon>Rhabditida</taxon>
        <taxon>Rhabditina</taxon>
        <taxon>Rhabditomorpha</taxon>
        <taxon>Rhabditoidea</taxon>
        <taxon>Rhabditidae</taxon>
        <taxon>Peloderinae</taxon>
        <taxon>Caenorhabditis</taxon>
    </lineage>
</organism>
<dbReference type="EMBL" id="BX284602">
    <property type="protein sequence ID" value="CCD73641.1"/>
    <property type="molecule type" value="Genomic_DNA"/>
</dbReference>
<dbReference type="RefSeq" id="NP_494788.3">
    <property type="nucleotide sequence ID" value="NM_062387.5"/>
</dbReference>
<dbReference type="SMR" id="Q23194"/>
<dbReference type="ComplexPortal" id="CPX-1136">
    <property type="entry name" value="HOPS tethering complex"/>
</dbReference>
<dbReference type="ComplexPortal" id="CPX-1137">
    <property type="entry name" value="CORVET tethering complex"/>
</dbReference>
<dbReference type="FunCoup" id="Q23194">
    <property type="interactions" value="3169"/>
</dbReference>
<dbReference type="STRING" id="6239.W06B4.3.1"/>
<dbReference type="PaxDb" id="6239-W06B4.3"/>
<dbReference type="PeptideAtlas" id="Q23194"/>
<dbReference type="EnsemblMetazoa" id="W06B4.3.1">
    <property type="protein sequence ID" value="W06B4.3.1"/>
    <property type="gene ID" value="WBGene00021058"/>
</dbReference>
<dbReference type="GeneID" id="173783"/>
<dbReference type="KEGG" id="cel:CELE_W06B4.3"/>
<dbReference type="UCSC" id="W06B4.3">
    <property type="organism name" value="c. elegans"/>
</dbReference>
<dbReference type="AGR" id="WB:WBGene00021058"/>
<dbReference type="CTD" id="173783"/>
<dbReference type="WormBase" id="W06B4.3">
    <property type="protein sequence ID" value="CE43757"/>
    <property type="gene ID" value="WBGene00021058"/>
    <property type="gene designation" value="vps-18"/>
</dbReference>
<dbReference type="eggNOG" id="KOG2034">
    <property type="taxonomic scope" value="Eukaryota"/>
</dbReference>
<dbReference type="GeneTree" id="ENSGT00940000153635"/>
<dbReference type="HOGENOM" id="CLU_003488_1_0_1"/>
<dbReference type="InParanoid" id="Q23194"/>
<dbReference type="OMA" id="KFFVFPC"/>
<dbReference type="OrthoDB" id="1845386at2759"/>
<dbReference type="PhylomeDB" id="Q23194"/>
<dbReference type="PRO" id="PR:Q23194"/>
<dbReference type="Proteomes" id="UP000001940">
    <property type="component" value="Chromosome II"/>
</dbReference>
<dbReference type="Bgee" id="WBGene00021058">
    <property type="expression patterns" value="Expressed in germ line (C elegans) and 4 other cell types or tissues"/>
</dbReference>
<dbReference type="GO" id="GO:0005776">
    <property type="term" value="C:autophagosome"/>
    <property type="evidence" value="ECO:0007669"/>
    <property type="project" value="UniProtKB-SubCell"/>
</dbReference>
<dbReference type="GO" id="GO:0030136">
    <property type="term" value="C:clathrin-coated vesicle"/>
    <property type="evidence" value="ECO:0007669"/>
    <property type="project" value="UniProtKB-SubCell"/>
</dbReference>
<dbReference type="GO" id="GO:0033263">
    <property type="term" value="C:CORVET complex"/>
    <property type="evidence" value="ECO:0000303"/>
    <property type="project" value="ComplexPortal"/>
</dbReference>
<dbReference type="GO" id="GO:0005737">
    <property type="term" value="C:cytoplasm"/>
    <property type="evidence" value="ECO:0000314"/>
    <property type="project" value="WormBase"/>
</dbReference>
<dbReference type="GO" id="GO:0031901">
    <property type="term" value="C:early endosome membrane"/>
    <property type="evidence" value="ECO:0000303"/>
    <property type="project" value="ComplexPortal"/>
</dbReference>
<dbReference type="GO" id="GO:0005768">
    <property type="term" value="C:endosome"/>
    <property type="evidence" value="ECO:0000318"/>
    <property type="project" value="GO_Central"/>
</dbReference>
<dbReference type="GO" id="GO:0030897">
    <property type="term" value="C:HOPS complex"/>
    <property type="evidence" value="ECO:0000250"/>
    <property type="project" value="WormBase"/>
</dbReference>
<dbReference type="GO" id="GO:0031902">
    <property type="term" value="C:late endosome membrane"/>
    <property type="evidence" value="ECO:0007669"/>
    <property type="project" value="UniProtKB-SubCell"/>
</dbReference>
<dbReference type="GO" id="GO:0005765">
    <property type="term" value="C:lysosomal membrane"/>
    <property type="evidence" value="ECO:0007669"/>
    <property type="project" value="UniProtKB-SubCell"/>
</dbReference>
<dbReference type="GO" id="GO:0030674">
    <property type="term" value="F:protein-macromolecule adaptor activity"/>
    <property type="evidence" value="ECO:0000318"/>
    <property type="project" value="GO_Central"/>
</dbReference>
<dbReference type="GO" id="GO:0008270">
    <property type="term" value="F:zinc ion binding"/>
    <property type="evidence" value="ECO:0007669"/>
    <property type="project" value="UniProtKB-KW"/>
</dbReference>
<dbReference type="GO" id="GO:0006914">
    <property type="term" value="P:autophagy"/>
    <property type="evidence" value="ECO:0007669"/>
    <property type="project" value="UniProtKB-KW"/>
</dbReference>
<dbReference type="GO" id="GO:0007032">
    <property type="term" value="P:endosome organization"/>
    <property type="evidence" value="ECO:0000315"/>
    <property type="project" value="WormBase"/>
</dbReference>
<dbReference type="GO" id="GO:0008333">
    <property type="term" value="P:endosome to lysosome transport"/>
    <property type="evidence" value="ECO:0000318"/>
    <property type="project" value="GO_Central"/>
</dbReference>
<dbReference type="GO" id="GO:0007040">
    <property type="term" value="P:lysosome organization"/>
    <property type="evidence" value="ECO:0000315"/>
    <property type="project" value="WormBase"/>
</dbReference>
<dbReference type="GO" id="GO:0048284">
    <property type="term" value="P:organelle fusion"/>
    <property type="evidence" value="ECO:0000315"/>
    <property type="project" value="UniProtKB"/>
</dbReference>
<dbReference type="GO" id="GO:0090389">
    <property type="term" value="P:phagosome-lysosome fusion involved in apoptotic cell clearance"/>
    <property type="evidence" value="ECO:0000315"/>
    <property type="project" value="WormBase"/>
</dbReference>
<dbReference type="GO" id="GO:0032889">
    <property type="term" value="P:regulation of vacuole fusion, non-autophagic"/>
    <property type="evidence" value="ECO:0000303"/>
    <property type="project" value="ComplexPortal"/>
</dbReference>
<dbReference type="GO" id="GO:0042144">
    <property type="term" value="P:vacuole fusion, non-autophagic"/>
    <property type="evidence" value="ECO:0000303"/>
    <property type="project" value="ComplexPortal"/>
</dbReference>
<dbReference type="GO" id="GO:0006904">
    <property type="term" value="P:vesicle docking involved in exocytosis"/>
    <property type="evidence" value="ECO:0000318"/>
    <property type="project" value="GO_Central"/>
</dbReference>
<dbReference type="GO" id="GO:0099022">
    <property type="term" value="P:vesicle tethering"/>
    <property type="evidence" value="ECO:0000303"/>
    <property type="project" value="ComplexPortal"/>
</dbReference>
<dbReference type="InterPro" id="IPR007810">
    <property type="entry name" value="Pep3_Vps18"/>
</dbReference>
<dbReference type="PANTHER" id="PTHR23323">
    <property type="entry name" value="VACUOLAR PROTEIN SORTING-ASSOCIATED PROTEIN"/>
    <property type="match status" value="1"/>
</dbReference>
<dbReference type="PANTHER" id="PTHR23323:SF26">
    <property type="entry name" value="VACUOLAR PROTEIN SORTING-ASSOCIATED PROTEIN 18 HOMOLOG"/>
    <property type="match status" value="1"/>
</dbReference>
<dbReference type="Pfam" id="PF05131">
    <property type="entry name" value="Pep3_Vps18"/>
    <property type="match status" value="1"/>
</dbReference>
<reference evidence="9" key="1">
    <citation type="journal article" date="1998" name="Science">
        <title>Genome sequence of the nematode C. elegans: a platform for investigating biology.</title>
        <authorList>
            <consortium name="The C. elegans sequencing consortium"/>
        </authorList>
    </citation>
    <scope>NUCLEOTIDE SEQUENCE [LARGE SCALE GENOMIC DNA]</scope>
    <source>
        <strain evidence="9">Bristol N2</strain>
    </source>
</reference>
<reference key="2">
    <citation type="journal article" date="2009" name="Mol. Biol. Cell">
        <title>Lysosome biogenesis mediated by vps-18 affects apoptotic cell degradation in Caenorhabditis elegans.</title>
        <authorList>
            <person name="Xiao H."/>
            <person name="Chen D."/>
            <person name="Fang Z."/>
            <person name="Xu J."/>
            <person name="Sun X."/>
            <person name="Song S."/>
            <person name="Liu J."/>
            <person name="Yang C."/>
        </authorList>
    </citation>
    <scope>FUNCTION</scope>
    <scope>SUBCELLULAR LOCATION</scope>
    <scope>TISSUE SPECIFICITY</scope>
    <scope>DEVELOPMENTAL STAGE</scope>
    <scope>DISRUPTION PHENOTYPE</scope>
    <scope>MUTAGENESIS OF CYS-923 AND HIS-925</scope>
</reference>
<reference key="3">
    <citation type="journal article" date="2014" name="Mol. Biol. Cell">
        <title>Caenorhabditis elegans HOPS and CCZ-1 mediate trafficking to lysosome-related organelles independently of RAB-7 and SAND-1.</title>
        <authorList>
            <person name="Delahaye J.L."/>
            <person name="Foster O.K."/>
            <person name="Vine A."/>
            <person name="Saxton D.S."/>
            <person name="Curtin T.P."/>
            <person name="Somhegyi H."/>
            <person name="Salesky R."/>
            <person name="Hermann G.J."/>
        </authorList>
    </citation>
    <scope>FUNCTION</scope>
    <scope>DISRUPTION PHENOTYPE</scope>
</reference>
<reference key="4">
    <citation type="journal article" date="2014" name="Mol. Biol. Cell">
        <title>Loss of the Sec1/Munc18-family proteins VPS-33.2 and VPS-33.1 bypasses a block in endosome maturation in Caenorhabditis elegans.</title>
        <authorList>
            <person name="Solinger J.A."/>
            <person name="Spang A."/>
        </authorList>
    </citation>
    <scope>FUNCTION</scope>
    <scope>DISRUPTION PHENOTYPE</scope>
</reference>
<reference key="5">
    <citation type="journal article" date="2016" name="J. Cell Biol.">
        <title>Negative regulation of phosphatidylinositol 3-phosphate levels in early-to-late endosome conversion.</title>
        <authorList>
            <person name="Liu K."/>
            <person name="Jian Y."/>
            <person name="Sun X."/>
            <person name="Yang C."/>
            <person name="Gao Z."/>
            <person name="Zhang Z."/>
            <person name="Liu X."/>
            <person name="Li Y."/>
            <person name="Xu J."/>
            <person name="Jing Y."/>
            <person name="Mitani S."/>
            <person name="He S."/>
            <person name="Yang C."/>
        </authorList>
    </citation>
    <scope>FUNCTION</scope>
    <scope>DISRUPTION PHENOTYPE</scope>
</reference>
<reference key="6">
    <citation type="journal article" date="2016" name="J. Cell Biol.">
        <title>Correction: Negative regulation of phosphatidylinositol 3-phosphate levels in early-to-late endosome conversion.</title>
        <authorList>
            <person name="Liu K."/>
            <person name="Jian Y."/>
            <person name="Sun X."/>
            <person name="Yang C."/>
            <person name="Gao Z."/>
            <person name="Zhang Z."/>
            <person name="Liu X."/>
            <person name="Li Y."/>
            <person name="Xu J."/>
            <person name="Jing Y."/>
            <person name="Mitani S."/>
            <person name="He S."/>
            <person name="Yang C."/>
        </authorList>
    </citation>
    <scope>ERRATUM OF PUBMED:26783301</scope>
</reference>
<feature type="chain" id="PRO_0000441274" description="Vacuolar protein sorting-associated protein 18 homolog" evidence="8">
    <location>
        <begin position="1"/>
        <end position="1026"/>
    </location>
</feature>
<feature type="zinc finger region" description="RING-type; degenerate" evidence="3">
    <location>
        <begin position="906"/>
        <end position="932"/>
    </location>
</feature>
<feature type="coiled-coil region" evidence="2">
    <location>
        <begin position="858"/>
        <end position="896"/>
    </location>
</feature>
<feature type="mutagenesis site" description="Fails to rescue the defects in germ cell corpse clearance in the vps-18 (tm1125) deletion mutant; when associated with A-925." evidence="4">
    <original>C</original>
    <variation>A</variation>
    <location>
        <position position="923"/>
    </location>
</feature>
<feature type="mutagenesis site" description="Fails to rescue the defects in germ cell corpse clearance in the vps-18 (tm1125) deletion mutant; when associated with A-923." evidence="4">
    <original>H</original>
    <variation>A</variation>
    <location>
        <position position="925"/>
    </location>
</feature>